<proteinExistence type="evidence at protein level"/>
<evidence type="ECO:0000250" key="1"/>
<evidence type="ECO:0000269" key="2">
    <source>
    </source>
</evidence>
<evidence type="ECO:0000269" key="3">
    <source>
    </source>
</evidence>
<evidence type="ECO:0000269" key="4">
    <source>
    </source>
</evidence>
<evidence type="ECO:0000269" key="5">
    <source>
    </source>
</evidence>
<evidence type="ECO:0000269" key="6">
    <source>
    </source>
</evidence>
<evidence type="ECO:0000269" key="7">
    <source>
    </source>
</evidence>
<evidence type="ECO:0000305" key="8"/>
<evidence type="ECO:0000305" key="9">
    <source>
    </source>
</evidence>
<organism>
    <name type="scientific">Saccharomyces cerevisiae (strain ATCC 204508 / S288c)</name>
    <name type="common">Baker's yeast</name>
    <dbReference type="NCBI Taxonomy" id="559292"/>
    <lineage>
        <taxon>Eukaryota</taxon>
        <taxon>Fungi</taxon>
        <taxon>Dikarya</taxon>
        <taxon>Ascomycota</taxon>
        <taxon>Saccharomycotina</taxon>
        <taxon>Saccharomycetes</taxon>
        <taxon>Saccharomycetales</taxon>
        <taxon>Saccharomycetaceae</taxon>
        <taxon>Saccharomyces</taxon>
    </lineage>
</organism>
<gene>
    <name type="primary">ARP1</name>
    <name type="synonym">ACT3</name>
    <name type="synonym">ACT5</name>
    <name type="ordered locus">YHR129C</name>
</gene>
<reference key="1">
    <citation type="journal article" date="1994" name="J. Cell Biol.">
        <title>ACT3: a putative centractin homologue in S. cerevisiae is required for proper orientation of the mitotic spindle.</title>
        <authorList>
            <person name="Clark S.W."/>
            <person name="Meyer D.I."/>
        </authorList>
    </citation>
    <scope>NUCLEOTIDE SEQUENCE [GENOMIC DNA]</scope>
    <source>
        <strain>ATCC 26109 / X2180</strain>
    </source>
</reference>
<reference key="2">
    <citation type="journal article" date="1994" name="Cell">
        <title>A yeast actin-related protein homologous to that in vertebrate dynactin complex is important for spindle orientation and nuclear migration.</title>
        <authorList>
            <person name="Muhua L."/>
            <person name="Karpova T.S."/>
            <person name="Cooper J.A."/>
        </authorList>
    </citation>
    <scope>NUCLEOTIDE SEQUENCE [GENOMIC DNA]</scope>
</reference>
<reference key="3">
    <citation type="journal article" date="1994" name="Science">
        <title>Complete nucleotide sequence of Saccharomyces cerevisiae chromosome VIII.</title>
        <authorList>
            <person name="Johnston M."/>
            <person name="Andrews S."/>
            <person name="Brinkman R."/>
            <person name="Cooper J."/>
            <person name="Ding H."/>
            <person name="Dover J."/>
            <person name="Du Z."/>
            <person name="Favello A."/>
            <person name="Fulton L."/>
            <person name="Gattung S."/>
            <person name="Geisel C."/>
            <person name="Kirsten J."/>
            <person name="Kucaba T."/>
            <person name="Hillier L.W."/>
            <person name="Jier M."/>
            <person name="Johnston L."/>
            <person name="Langston Y."/>
            <person name="Latreille P."/>
            <person name="Louis E.J."/>
            <person name="Macri C."/>
            <person name="Mardis E."/>
            <person name="Menezes S."/>
            <person name="Mouser L."/>
            <person name="Nhan M."/>
            <person name="Rifkin L."/>
            <person name="Riles L."/>
            <person name="St Peter H."/>
            <person name="Trevaskis E."/>
            <person name="Vaughan K."/>
            <person name="Vignati D."/>
            <person name="Wilcox L."/>
            <person name="Wohldman P."/>
            <person name="Waterston R."/>
            <person name="Wilson R."/>
            <person name="Vaudin M."/>
        </authorList>
    </citation>
    <scope>NUCLEOTIDE SEQUENCE [LARGE SCALE GENOMIC DNA]</scope>
    <source>
        <strain>ATCC 204508 / S288c</strain>
    </source>
</reference>
<reference key="4">
    <citation type="journal article" date="2014" name="G3 (Bethesda)">
        <title>The reference genome sequence of Saccharomyces cerevisiae: Then and now.</title>
        <authorList>
            <person name="Engel S.R."/>
            <person name="Dietrich F.S."/>
            <person name="Fisk D.G."/>
            <person name="Binkley G."/>
            <person name="Balakrishnan R."/>
            <person name="Costanzo M.C."/>
            <person name="Dwight S.S."/>
            <person name="Hitz B.C."/>
            <person name="Karra K."/>
            <person name="Nash R.S."/>
            <person name="Weng S."/>
            <person name="Wong E.D."/>
            <person name="Lloyd P."/>
            <person name="Skrzypek M.S."/>
            <person name="Miyasato S.R."/>
            <person name="Simison M."/>
            <person name="Cherry J.M."/>
        </authorList>
    </citation>
    <scope>GENOME REANNOTATION</scope>
    <source>
        <strain>ATCC 204508 / S288c</strain>
    </source>
</reference>
<reference key="5">
    <citation type="journal article" date="2007" name="Genome Res.">
        <title>Approaching a complete repository of sequence-verified protein-encoding clones for Saccharomyces cerevisiae.</title>
        <authorList>
            <person name="Hu Y."/>
            <person name="Rolfs A."/>
            <person name="Bhullar B."/>
            <person name="Murthy T.V.S."/>
            <person name="Zhu C."/>
            <person name="Berger M.F."/>
            <person name="Camargo A.A."/>
            <person name="Kelley F."/>
            <person name="McCarron S."/>
            <person name="Jepson D."/>
            <person name="Richardson A."/>
            <person name="Raphael J."/>
            <person name="Moreira D."/>
            <person name="Taycher E."/>
            <person name="Zuo D."/>
            <person name="Mohr S."/>
            <person name="Kane M.F."/>
            <person name="Williamson J."/>
            <person name="Simpson A.J.G."/>
            <person name="Bulyk M.L."/>
            <person name="Harlow E."/>
            <person name="Marsischky G."/>
            <person name="Kolodner R.D."/>
            <person name="LaBaer J."/>
        </authorList>
    </citation>
    <scope>NUCLEOTIDE SEQUENCE [LARGE SCALE GENOMIC DNA]</scope>
</reference>
<reference key="6">
    <citation type="journal article" date="1998" name="Mol. Biol. Cell">
        <title>The yeast dynactin complex is involved in partitioning the mitotic spindle between mother and daughter cells during anaphase B.</title>
        <authorList>
            <person name="Kahana J.A."/>
            <person name="Schlenstedt G."/>
            <person name="Evanchuk D.M."/>
            <person name="Geiser J.R."/>
            <person name="Hoyt M.A."/>
            <person name="Silver P.A."/>
        </authorList>
    </citation>
    <scope>IDENTIFICATION IN THE DYNACTIN COMPLEX</scope>
    <scope>FUNCTION OF THE DYNACTIN COMPLEX</scope>
</reference>
<reference key="7">
    <citation type="journal article" date="2003" name="Nature">
        <title>Global analysis of protein expression in yeast.</title>
        <authorList>
            <person name="Ghaemmaghami S."/>
            <person name="Huh W.-K."/>
            <person name="Bower K."/>
            <person name="Howson R.W."/>
            <person name="Belle A."/>
            <person name="Dephoure N."/>
            <person name="O'Shea E.K."/>
            <person name="Weissman J.S."/>
        </authorList>
    </citation>
    <scope>LEVEL OF PROTEIN EXPRESSION [LARGE SCALE ANALYSIS]</scope>
</reference>
<reference key="8">
    <citation type="journal article" date="2004" name="Nat. Cell Biol.">
        <title>Dynactin is involved in a checkpoint to monitor cell wall synthesis in Saccharomyces cerevisiae.</title>
        <authorList>
            <person name="Suzuki M."/>
            <person name="Igarashi R."/>
            <person name="Sekiya M."/>
            <person name="Utsugi T."/>
            <person name="Morishita S."/>
            <person name="Yukawa M."/>
            <person name="Ohya Y."/>
        </authorList>
    </citation>
    <scope>FUNCTION OF THE DYNACTIN COMPLEX</scope>
</reference>
<reference key="9">
    <citation type="journal article" date="2005" name="Cell Struct. Funct.">
        <title>Molecular dissection of ARP1 regions required for nuclear migration and cell wall integrity checkpoint functions in Saccharomyces cerevisiae.</title>
        <authorList>
            <person name="Igarashi R."/>
            <person name="Suzuki M."/>
            <person name="Nogami S."/>
            <person name="Ohya Y."/>
        </authorList>
    </citation>
    <scope>MUTAGENESIS OF LYS-46; 48-ASP-LYS-49; LYS-73; ARG-75; 79-LYS-HIS-80; 84-GLU-ASP-85; ASP-87; 108-GLU-HIS-109; ASP-162; GLU-165; 214-GLU--GLU-216; 222-LYS--LYS-224; 233-LYS--GLU-235; 236-GLU--LYS-238; LYS-251; ASP-254; 263-ASP-ARG-264; ARG-266; GLU-269; LYS-294; ASP-296; ASP-298; ASP-326; GLU-328; 344-GLU--LYS-346; 368-LYS-LYS-369 AND ASP-371</scope>
</reference>
<reference key="10">
    <citation type="journal article" date="2005" name="Mol. Biol. Cell">
        <title>Alanine scanning of Arp1 delineates a putative binding site for Jnm1/dynamitin and Nip100/p150Glued.</title>
        <authorList>
            <person name="Clark S.W."/>
            <person name="Rose M.D."/>
        </authorList>
    </citation>
    <scope>INTERACTION WITH JNM1</scope>
    <scope>MUTAGENESIS OF ASP-2; ASP-6; LYS-46; 48-ASP-LYS-49; 84-GLU-ASP-85; GLU-133; ASP-136; ARG-185; ASP-187; 214-GLU--GLU-216; ARG-219; 222-LYS--LYS-224; 233-LYS--LYS-238; LYS-251; ASP-254; ARG-266; GLU-269; 321-ASP-ARG-322; ASP-326; GLU-328; LYS-336; LYS-338; 344-GLU--LYS-346; LYS-369; ASP-371; 374-GLU-ASP-375 AND ARG-378</scope>
</reference>
<reference key="11">
    <citation type="journal article" date="2006" name="Mol. Biol. Cell">
        <title>Arp10p is a pointed-end-associated component of yeast dynactin.</title>
        <authorList>
            <person name="Clark S.W."/>
            <person name="Rose M.D."/>
        </authorList>
    </citation>
    <scope>SUBCELLULAR LOCATION</scope>
    <scope>SELF-ASSOCIATION</scope>
    <scope>INTERACTION WITH ARP10 AND JNM1</scope>
</reference>
<keyword id="KW-0963">Cytoplasm</keyword>
<keyword id="KW-0206">Cytoskeleton</keyword>
<keyword id="KW-0243">Dynein</keyword>
<keyword id="KW-0472">Membrane</keyword>
<keyword id="KW-0493">Microtubule</keyword>
<keyword id="KW-1185">Reference proteome</keyword>
<name>ARP1_YEAST</name>
<comment type="function">
    <text evidence="1 3 7">Core component of the dynactin complex which assists cytoplasmic dynein by increasing its processivity and by regulation of its cargo binding (By similarity). The dynactin complex is required for the spindle translocation late in anaphase and is involved in a cell wall synthesis checkpoint. ARP1 forms the backbone filament of the dynactin rod structure and serves as the scaffold for the remaining subunits. Required for proper orientation of the mitotic spindle.</text>
</comment>
<comment type="subunit">
    <text evidence="1">Self-associates to form an actin-like filament of 8-10 monomers. Component of the dynactin complex composed of at least ARP1, JNM1, NIP100 and ARP10. Dynactin comprises a short rod of the ARP1 filament attached to ARP10 at its pointed-end and probably associated with the capping protein at its barbed-end. The rod is implicated in dynein cargo binding. A sidearm formed by NIP100 projects from the ARP1 filament and is implicated in motor binding (By similarity).</text>
</comment>
<comment type="interaction">
    <interactant intactId="EBI-2920">
        <id>P38696</id>
    </interactant>
    <interactant intactId="EBI-2977">
        <id>Q04549</id>
        <label>ARP10</label>
    </interactant>
    <organismsDiffer>false</organismsDiffer>
    <experiments>5</experiments>
</comment>
<comment type="interaction">
    <interactant intactId="EBI-2920">
        <id>P38696</id>
    </interactant>
    <interactant intactId="EBI-9415">
        <id>P36224</id>
        <label>JNM1</label>
    </interactant>
    <organismsDiffer>false</organismsDiffer>
    <experiments>7</experiments>
</comment>
<comment type="interaction">
    <interactant intactId="EBI-2920">
        <id>P38696</id>
    </interactant>
    <interactant intactId="EBI-12049">
        <id>P33420</id>
        <label>NIP100</label>
    </interactant>
    <organismsDiffer>false</organismsDiffer>
    <experiments>4</experiments>
</comment>
<comment type="subcellular location">
    <subcellularLocation>
        <location evidence="9">Cytoplasm</location>
        <location evidence="9">Cytoskeleton</location>
    </subcellularLocation>
    <subcellularLocation>
        <location evidence="5">Membrane</location>
    </subcellularLocation>
    <text>Membrane-associated.</text>
</comment>
<comment type="miscellaneous">
    <text evidence="2">Present with 1580 molecules/cell in log phase SD medium.</text>
</comment>
<comment type="similarity">
    <text evidence="8">Belongs to the actin family. ARP1 subfamily.</text>
</comment>
<dbReference type="EMBL" id="X79811">
    <property type="protein sequence ID" value="CAA56206.1"/>
    <property type="molecule type" value="Genomic_DNA"/>
</dbReference>
<dbReference type="EMBL" id="U10398">
    <property type="protein sequence ID" value="AAB68412.1"/>
    <property type="molecule type" value="Genomic_DNA"/>
</dbReference>
<dbReference type="EMBL" id="AY693084">
    <property type="protein sequence ID" value="AAT93103.1"/>
    <property type="molecule type" value="Genomic_DNA"/>
</dbReference>
<dbReference type="EMBL" id="BK006934">
    <property type="protein sequence ID" value="DAA06822.1"/>
    <property type="molecule type" value="Genomic_DNA"/>
</dbReference>
<dbReference type="PIR" id="S48973">
    <property type="entry name" value="S48973"/>
</dbReference>
<dbReference type="RefSeq" id="NP_011997.1">
    <property type="nucleotide sequence ID" value="NM_001179259.1"/>
</dbReference>
<dbReference type="SMR" id="P38696"/>
<dbReference type="BioGRID" id="36562">
    <property type="interactions" value="453"/>
</dbReference>
<dbReference type="ComplexPortal" id="CPX-1805">
    <property type="entry name" value="Dynactin complex"/>
</dbReference>
<dbReference type="DIP" id="DIP-1205N"/>
<dbReference type="FunCoup" id="P38696">
    <property type="interactions" value="81"/>
</dbReference>
<dbReference type="IntAct" id="P38696">
    <property type="interactions" value="22"/>
</dbReference>
<dbReference type="MINT" id="P38696"/>
<dbReference type="STRING" id="4932.YHR129C"/>
<dbReference type="PaxDb" id="4932-YHR129C"/>
<dbReference type="PeptideAtlas" id="P38696"/>
<dbReference type="DNASU" id="856530"/>
<dbReference type="EnsemblFungi" id="YHR129C_mRNA">
    <property type="protein sequence ID" value="YHR129C"/>
    <property type="gene ID" value="YHR129C"/>
</dbReference>
<dbReference type="GeneID" id="856530"/>
<dbReference type="KEGG" id="sce:YHR129C"/>
<dbReference type="AGR" id="SGD:S000001171"/>
<dbReference type="SGD" id="S000001171">
    <property type="gene designation" value="ARP1"/>
</dbReference>
<dbReference type="VEuPathDB" id="FungiDB:YHR129C"/>
<dbReference type="eggNOG" id="KOG0676">
    <property type="taxonomic scope" value="Eukaryota"/>
</dbReference>
<dbReference type="GeneTree" id="ENSGT00940000170518"/>
<dbReference type="HOGENOM" id="CLU_027965_0_2_1"/>
<dbReference type="InParanoid" id="P38696"/>
<dbReference type="OMA" id="YTTWTGG"/>
<dbReference type="OrthoDB" id="5132116at2759"/>
<dbReference type="BioCyc" id="YEAST:G3O-31168-MONOMER"/>
<dbReference type="Reactome" id="R-SCE-6798695">
    <property type="pathway name" value="Neutrophil degranulation"/>
</dbReference>
<dbReference type="BioGRID-ORCS" id="856530">
    <property type="hits" value="3 hits in 10 CRISPR screens"/>
</dbReference>
<dbReference type="PRO" id="PR:P38696"/>
<dbReference type="Proteomes" id="UP000002311">
    <property type="component" value="Chromosome VIII"/>
</dbReference>
<dbReference type="RNAct" id="P38696">
    <property type="molecule type" value="protein"/>
</dbReference>
<dbReference type="GO" id="GO:0015629">
    <property type="term" value="C:actin cytoskeleton"/>
    <property type="evidence" value="ECO:0000303"/>
    <property type="project" value="ComplexPortal"/>
</dbReference>
<dbReference type="GO" id="GO:0005737">
    <property type="term" value="C:cytoplasm"/>
    <property type="evidence" value="ECO:0007669"/>
    <property type="project" value="UniProtKB-KW"/>
</dbReference>
<dbReference type="GO" id="GO:0005869">
    <property type="term" value="C:dynactin complex"/>
    <property type="evidence" value="ECO:0000314"/>
    <property type="project" value="SGD"/>
</dbReference>
<dbReference type="GO" id="GO:0030286">
    <property type="term" value="C:dynein complex"/>
    <property type="evidence" value="ECO:0007669"/>
    <property type="project" value="UniProtKB-KW"/>
</dbReference>
<dbReference type="GO" id="GO:0016020">
    <property type="term" value="C:membrane"/>
    <property type="evidence" value="ECO:0007669"/>
    <property type="project" value="UniProtKB-SubCell"/>
</dbReference>
<dbReference type="GO" id="GO:0005874">
    <property type="term" value="C:microtubule"/>
    <property type="evidence" value="ECO:0007669"/>
    <property type="project" value="UniProtKB-KW"/>
</dbReference>
<dbReference type="GO" id="GO:0005200">
    <property type="term" value="F:structural constituent of cytoskeleton"/>
    <property type="evidence" value="ECO:0000314"/>
    <property type="project" value="SGD"/>
</dbReference>
<dbReference type="GO" id="GO:0030048">
    <property type="term" value="P:actin filament-based movement"/>
    <property type="evidence" value="ECO:0000303"/>
    <property type="project" value="ComplexPortal"/>
</dbReference>
<dbReference type="GO" id="GO:0000132">
    <property type="term" value="P:establishment of mitotic spindle orientation"/>
    <property type="evidence" value="ECO:0000315"/>
    <property type="project" value="SGD"/>
</dbReference>
<dbReference type="GO" id="GO:0031578">
    <property type="term" value="P:mitotic spindle orientation checkpoint signaling"/>
    <property type="evidence" value="ECO:0000316"/>
    <property type="project" value="SGD"/>
</dbReference>
<dbReference type="GO" id="GO:0007097">
    <property type="term" value="P:nuclear migration"/>
    <property type="evidence" value="ECO:0000315"/>
    <property type="project" value="SGD"/>
</dbReference>
<dbReference type="CDD" id="cd10216">
    <property type="entry name" value="ASKHA_NBD_Arp1"/>
    <property type="match status" value="1"/>
</dbReference>
<dbReference type="FunFam" id="3.90.640.10:FF:000007">
    <property type="entry name" value="Actin like 7B"/>
    <property type="match status" value="1"/>
</dbReference>
<dbReference type="FunFam" id="3.30.420.40:FF:000018">
    <property type="entry name" value="Actin-like protein (Centractin)"/>
    <property type="match status" value="1"/>
</dbReference>
<dbReference type="Gene3D" id="3.30.420.40">
    <property type="match status" value="2"/>
</dbReference>
<dbReference type="Gene3D" id="3.90.640.10">
    <property type="entry name" value="Actin, Chain A, domain 4"/>
    <property type="match status" value="1"/>
</dbReference>
<dbReference type="InterPro" id="IPR004000">
    <property type="entry name" value="Actin"/>
</dbReference>
<dbReference type="InterPro" id="IPR020902">
    <property type="entry name" value="Actin/actin-like_CS"/>
</dbReference>
<dbReference type="InterPro" id="IPR043129">
    <property type="entry name" value="ATPase_NBD"/>
</dbReference>
<dbReference type="PANTHER" id="PTHR11937">
    <property type="entry name" value="ACTIN"/>
    <property type="match status" value="1"/>
</dbReference>
<dbReference type="Pfam" id="PF00022">
    <property type="entry name" value="Actin"/>
    <property type="match status" value="1"/>
</dbReference>
<dbReference type="PRINTS" id="PR00190">
    <property type="entry name" value="ACTIN"/>
</dbReference>
<dbReference type="SMART" id="SM00268">
    <property type="entry name" value="ACTIN"/>
    <property type="match status" value="1"/>
</dbReference>
<dbReference type="SUPFAM" id="SSF53067">
    <property type="entry name" value="Actin-like ATPase domain"/>
    <property type="match status" value="2"/>
</dbReference>
<dbReference type="PROSITE" id="PS01132">
    <property type="entry name" value="ACTINS_ACT_LIKE"/>
    <property type="match status" value="1"/>
</dbReference>
<feature type="chain" id="PRO_0000089066" description="Centractin">
    <location>
        <begin position="1"/>
        <end position="384"/>
    </location>
</feature>
<feature type="mutagenesis site" description="Temperature-sensitive; when associated with A-6." evidence="4">
    <original>D</original>
    <variation>A</variation>
    <location>
        <position position="2"/>
    </location>
</feature>
<feature type="mutagenesis site" description="Temperature-sensitive; when associated with A-2." evidence="4">
    <original>D</original>
    <variation>A</variation>
    <location>
        <position position="6"/>
    </location>
</feature>
<feature type="mutagenesis site" description="Strongly reduces interaction with JNM1. Reduces nuclear migration in mitosis; when associated with 48-A-A-49." evidence="4 6">
    <original>K</original>
    <variation>A</variation>
    <location>
        <position position="46"/>
    </location>
</feature>
<feature type="mutagenesis site" description="Strongly reduces interaction with JNM1. Reduces nuclear migration in mitosis; when associated with A-46." evidence="4 6">
    <original>DK</original>
    <variation>AA</variation>
    <location>
        <begin position="48"/>
        <end position="49"/>
    </location>
</feature>
<feature type="mutagenesis site" description="Reduces spindle formation; when associated with A-75." evidence="6">
    <original>K</original>
    <variation>A</variation>
    <location>
        <position position="73"/>
    </location>
</feature>
<feature type="mutagenesis site" description="Reduces spindle formation; when associated with A-73." evidence="6">
    <original>R</original>
    <variation>A</variation>
    <location>
        <position position="75"/>
    </location>
</feature>
<feature type="mutagenesis site" description="Reduces nuclear migration in mitosis." evidence="6">
    <original>KH</original>
    <variation>AA</variation>
    <location>
        <begin position="79"/>
        <end position="80"/>
    </location>
</feature>
<feature type="mutagenesis site" description="Reduces spindle formation. Strongly reduces interaction with JNM1. Reduces nuclear migration in mitosis; when associated with A-87." evidence="4 6">
    <original>ED</original>
    <variation>AA</variation>
    <location>
        <begin position="84"/>
        <end position="85"/>
    </location>
</feature>
<feature type="mutagenesis site" description="Reduces spindle formation. Reduces nuclear migration in mitosis; when associated with 84-A-A-85." evidence="6">
    <original>D</original>
    <variation>A</variation>
    <location>
        <position position="87"/>
    </location>
</feature>
<feature type="mutagenesis site" description="Reduces nuclear migration in mitosis." evidence="6">
    <original>EH</original>
    <variation>AA</variation>
    <location>
        <begin position="108"/>
        <end position="109"/>
    </location>
</feature>
<feature type="mutagenesis site" description="Lethal. Strongly reduces interaction with JNM1; when associated with A-136." evidence="4">
    <original>E</original>
    <variation>A</variation>
    <location>
        <position position="133"/>
    </location>
</feature>
<feature type="mutagenesis site" description="Lethal. Strongly reduces interaction with JNM1; when associated with A-133." evidence="4">
    <original>D</original>
    <variation>A</variation>
    <location>
        <position position="136"/>
    </location>
</feature>
<feature type="mutagenesis site" description="Reduces spindle formation. Reduces nuclear migration in mitosis; when associated with A-165." evidence="6">
    <original>D</original>
    <variation>A</variation>
    <location>
        <position position="162"/>
    </location>
</feature>
<feature type="mutagenesis site" description="Reduces spindle formation. Reduces nuclear migration in mitosis; when associated with A-162." evidence="6">
    <original>E</original>
    <variation>A</variation>
    <location>
        <position position="165"/>
    </location>
</feature>
<feature type="mutagenesis site" description="Temperature-sensitive. Strongly reduces interaction with JNM1; when associated with A-187." evidence="4">
    <original>R</original>
    <variation>A</variation>
    <location>
        <position position="185"/>
    </location>
</feature>
<feature type="mutagenesis site" description="Temperature-sensitive. Strongly reduces interaction with JNM1; when associated with A-185." evidence="4">
    <original>D</original>
    <variation>A</variation>
    <location>
        <position position="187"/>
    </location>
</feature>
<feature type="mutagenesis site" description="Lethal. Reduces spindle formation. Reduces nuclear migration in mitosis. Alters complex assembly; when associated with A-219." evidence="4 6">
    <original>ERE</original>
    <variation>AAA</variation>
    <location>
        <begin position="214"/>
        <end position="216"/>
    </location>
</feature>
<feature type="mutagenesis site" description="Lethal; when associated with 214-A--A-216." evidence="4">
    <original>R</original>
    <variation>A</variation>
    <location>
        <position position="219"/>
    </location>
</feature>
<feature type="mutagenesis site" description="Lethal. Reduces spindle formation. Reduces nuclear migration in mitosis." evidence="4 6">
    <original>KEK</original>
    <variation>AAA</variation>
    <location>
        <begin position="222"/>
        <end position="224"/>
    </location>
</feature>
<feature type="mutagenesis site" description="Temperature-sensitive. Strongly reduces interaction with JNM1." evidence="4">
    <original>KKEEEK</original>
    <variation>AAAAAA</variation>
    <location>
        <begin position="233"/>
        <end position="238"/>
    </location>
</feature>
<feature type="mutagenesis site" description="Reduces spindle formation." evidence="6">
    <original>KKE</original>
    <variation>AAA</variation>
    <location>
        <begin position="233"/>
        <end position="235"/>
    </location>
</feature>
<feature type="mutagenesis site" description="Reduces spindle formation." evidence="6">
    <original>EEK</original>
    <variation>AAA</variation>
    <location>
        <begin position="236"/>
        <end position="238"/>
    </location>
</feature>
<feature type="mutagenesis site" description="Lethal and dominant cold-sensitive. Reduces nuclear migration in mitosis; when associated with A-254." evidence="4 6">
    <original>K</original>
    <variation>A</variation>
    <location>
        <position position="251"/>
    </location>
</feature>
<feature type="mutagenesis site" description="Lethal and dominant cold-sensitive. Reduces nuclear migration in mitosis; when associated with A-251." evidence="4 6">
    <original>D</original>
    <variation>A</variation>
    <location>
        <position position="254"/>
    </location>
</feature>
<feature type="mutagenesis site" description="Reduces spindle formation." evidence="6">
    <original>DR</original>
    <variation>AA</variation>
    <location>
        <begin position="263"/>
        <end position="264"/>
    </location>
</feature>
<feature type="mutagenesis site" description="Lethal. Reduces spindle formation. Reduces nuclear migration in mitosis; when associated with A-269." evidence="4 6">
    <original>R</original>
    <variation>A</variation>
    <location>
        <position position="266"/>
    </location>
</feature>
<feature type="mutagenesis site" description="Lethal. Reduces spindle formation. Reduces nuclear migration in mitosis; when associated with A-266." evidence="4 6">
    <original>E</original>
    <variation>A</variation>
    <location>
        <position position="269"/>
    </location>
</feature>
<feature type="mutagenesis site" description="Reduces nuclear migration in mitosis; when associated with A-296 and A-298." evidence="6">
    <original>K</original>
    <variation>A</variation>
    <location>
        <position position="294"/>
    </location>
</feature>
<feature type="mutagenesis site" description="Reduces nuclear migration in mitosis; when associated with A-294 and A-298." evidence="6">
    <original>D</original>
    <variation>A</variation>
    <location>
        <position position="296"/>
    </location>
</feature>
<feature type="mutagenesis site" description="Reduces nuclear migration in mitosis; when associated with A-294 and A-296." evidence="6">
    <original>D</original>
    <variation>A</variation>
    <location>
        <position position="298"/>
    </location>
</feature>
<feature type="mutagenesis site" description="Lethal. Strongly reduces interaction with JNM1." evidence="4">
    <original>DR</original>
    <variation>AA</variation>
    <location>
        <begin position="321"/>
        <end position="322"/>
    </location>
</feature>
<feature type="mutagenesis site" description="Temperature-sensitive. Reduces nuclear migration in mitosis. Strongly reduces interaction with JNM1; when associated with A-328." evidence="4 6">
    <original>D</original>
    <variation>A</variation>
    <location>
        <position position="326"/>
    </location>
</feature>
<feature type="mutagenesis site" description="Temperature-sensitive. Reduces nuclear migration in mitosis. Strongly reduces interaction with JNM1; when associated with A-326." evidence="4 6">
    <original>E</original>
    <variation>A</variation>
    <location>
        <position position="328"/>
    </location>
</feature>
<feature type="mutagenesis site" description="Strongly reduces interaction with JNM1; when associated with A-338." evidence="4">
    <original>K</original>
    <variation>A</variation>
    <location>
        <position position="336"/>
    </location>
</feature>
<feature type="mutagenesis site" description="Strongly reduces interaction with JNM1; when associated with A-336." evidence="4">
    <original>K</original>
    <variation>A</variation>
    <location>
        <position position="338"/>
    </location>
</feature>
<feature type="mutagenesis site" description="Temperature-sensitive. Reduces nuclear migration in mitosis. Strongly reduces interaction with JNM1." evidence="4 6">
    <original>ERK</original>
    <variation>AAA</variation>
    <location>
        <begin position="344"/>
        <end position="346"/>
    </location>
</feature>
<feature type="mutagenesis site" description="Reduces nuclear migration in mitosis; when associated with A-371." evidence="6">
    <original>KK</original>
    <variation>AA</variation>
    <location>
        <begin position="368"/>
        <end position="369"/>
    </location>
</feature>
<feature type="mutagenesis site" description="Lethal. Strongly reduces interaction with JNM1; when associated with A-371." evidence="4">
    <original>K</original>
    <variation>A</variation>
    <location>
        <position position="369"/>
    </location>
</feature>
<feature type="mutagenesis site" description="Lethal. Strongly reduces interaction with JNM1; when associated with A-369." evidence="4 6">
    <original>D</original>
    <variation>A</variation>
    <location>
        <position position="371"/>
    </location>
</feature>
<feature type="mutagenesis site" description="Reduces nuclear migration in mitosis; when associated with 368-A-A-369." evidence="4 6">
    <original>D</original>
    <variation>AA</variation>
    <location>
        <position position="371"/>
    </location>
</feature>
<feature type="mutagenesis site" description="Temperature-sensitive. Reduces nuclear migration in mitosis. Strongly reduces interaction with JNM1; when associated with A-378." evidence="4">
    <original>ED</original>
    <variation>AA</variation>
    <location>
        <begin position="374"/>
        <end position="375"/>
    </location>
</feature>
<feature type="mutagenesis site" description="Temperature-sensitive. Reduces nuclear migration in mitosis. Strongly reduces interaction with JNM1; when associated with 374-A-A-375." evidence="4">
    <original>R</original>
    <variation>A</variation>
    <location>
        <position position="378"/>
    </location>
</feature>
<feature type="sequence conflict" description="In Ref. 5; AAT93103." evidence="8" ref="5">
    <original>Q</original>
    <variation>P</variation>
    <location>
        <position position="3"/>
    </location>
</feature>
<accession>P38696</accession>
<accession>D3DL78</accession>
<accession>Q6B1J6</accession>
<protein>
    <recommendedName>
        <fullName>Centractin</fullName>
    </recommendedName>
    <alternativeName>
        <fullName>Actin-like protein</fullName>
    </alternativeName>
    <alternativeName>
        <fullName>Actin-related protein 1</fullName>
    </alternativeName>
</protein>
<sequence length="384" mass="42995">MDQLSDSYALYNQPVVIDNGSGIIKAGFSGEERPKALEYCLVGNTKYDKVMLEGLQGDTFIGNNAQKLRGLLKLRYPIKHGVVEDWDSMELIWSYVLNEVLQLQNIGEHPLLITEAPMNPLKNREQMAQVLFETFDVSALYVSNPAVLSLYASGRTTGCVVDCGEGYCSTVPIYDGFALPASMMRMDIGGADITEQLQFQLRKSAGVSLFSSSEREIVRTMKEKVCYLAKNIKKEEEKYLQGTQDLISTFKLPDGRCIEVGNDRYRAPEILFSPQIIGLGYDGLSDMCMQSIWKVDLDLRKPLLSSIILSGGTTTLKGFGDRMLWDLEALTKGTSKIKIIAPSERKYTTWIGGSILTGLSTFQRLWTKKSDWLEDSTRVYSNLM</sequence>